<organism evidence="9">
    <name type="scientific">Bos taurus</name>
    <name type="common">Bovine</name>
    <dbReference type="NCBI Taxonomy" id="9913"/>
    <lineage>
        <taxon>Eukaryota</taxon>
        <taxon>Metazoa</taxon>
        <taxon>Chordata</taxon>
        <taxon>Craniata</taxon>
        <taxon>Vertebrata</taxon>
        <taxon>Euteleostomi</taxon>
        <taxon>Mammalia</taxon>
        <taxon>Eutheria</taxon>
        <taxon>Laurasiatheria</taxon>
        <taxon>Artiodactyla</taxon>
        <taxon>Ruminantia</taxon>
        <taxon>Pecora</taxon>
        <taxon>Bovidae</taxon>
        <taxon>Bovinae</taxon>
        <taxon>Bos</taxon>
    </lineage>
</organism>
<protein>
    <recommendedName>
        <fullName>D-glucuronyl C5-epimerase</fullName>
        <ecNumber evidence="5">5.1.3.17</ecNumber>
    </recommendedName>
    <alternativeName>
        <fullName>Heparan sulfate C5-epimerase</fullName>
        <shortName>Hsepi</shortName>
    </alternativeName>
    <alternativeName>
        <fullName>Heparin/heparan sulfate:glucuronic acid C5-epimerase</fullName>
    </alternativeName>
    <alternativeName>
        <fullName>Heparosan-N-sulfate-glucuronate 5-epimerase</fullName>
    </alternativeName>
</protein>
<accession>O18756</accession>
<reference evidence="7" key="1">
    <citation type="journal article" date="2001" name="J. Biol. Chem.">
        <title>Characterization of the D-glucuronyl C5-epimerase involved in the biosynthesis of heparin and heparan sulfate.</title>
        <authorList>
            <person name="Li J.-P."/>
            <person name="Gong F."/>
            <person name="El Darwish K."/>
            <person name="Jalkanen M."/>
            <person name="Lindahl U."/>
        </authorList>
    </citation>
    <scope>NUCLEOTIDE SEQUENCE [MRNA]</scope>
    <scope>FUNCTION</scope>
    <source>
        <tissue>Lung</tissue>
    </source>
</reference>
<reference evidence="7" key="2">
    <citation type="journal article" date="1997" name="J. Biol. Chem.">
        <title>Biosynthesis of heparin/heparan sulfate. cDNA cloning and expression of D-glucuronyl C5-epimerase from bovine lung.</title>
        <authorList>
            <person name="Li J.-P."/>
            <person name="Hagner-McWhirter A."/>
            <person name="Kjellen L."/>
            <person name="Palgi J."/>
            <person name="Jalkanen M."/>
            <person name="Lindahl U."/>
        </authorList>
    </citation>
    <scope>NUCLEOTIDE SEQUENCE [MRNA] OF 174-617</scope>
    <scope>PROTEIN SEQUENCE OF 247-259; 272-286; 420-429; 479-486 AND 546-581</scope>
    <source>
        <tissue>Lung</tissue>
    </source>
</reference>
<reference evidence="7" key="3">
    <citation type="journal article" date="2000" name="Biochem. J.">
        <title>Biosynthesis of heparin/heparan sulphate: mechanism of epimerization of glucuronyl C-5.</title>
        <authorList>
            <person name="Hagner-McWhirter A."/>
            <person name="Lindahl U."/>
            <person name="Li J.-P."/>
        </authorList>
    </citation>
    <scope>FUNCTION</scope>
    <scope>CATALYTIC ACTIVITY</scope>
    <scope>PATHWAY</scope>
    <source>
        <tissue>Liver</tissue>
    </source>
</reference>
<comment type="function">
    <text evidence="5 6">Converts D-glucuronic acid residues adjacent to N-sulfate sugar residues to L-iduronic acid residues, both in maturing heparan sulfate (HS) and heparin chains. This is important for further modifications that determine the specificity of interactions between these glycosaminoglycans and proteins.</text>
</comment>
<comment type="catalytic activity">
    <reaction evidence="5">
        <text>[heparosan-N-sulfate](n) = [heparan-N-sulfate](n)</text>
        <dbReference type="Rhea" id="RHEA:20197"/>
        <dbReference type="Rhea" id="RHEA-COMP:9556"/>
        <dbReference type="Rhea" id="RHEA-COMP:9557"/>
        <dbReference type="ChEBI" id="CHEBI:58041"/>
        <dbReference type="ChEBI" id="CHEBI:58287"/>
        <dbReference type="EC" id="5.1.3.17"/>
    </reaction>
</comment>
<comment type="pathway">
    <text evidence="8">Glycan metabolism; heparan sulfate biosynthesis.</text>
</comment>
<comment type="pathway">
    <text evidence="8">Glycan metabolism; heparin biosynthesis.</text>
</comment>
<comment type="subunit">
    <text evidence="1 3">Homodimer. Interacts with HS2ST1.</text>
</comment>
<comment type="subcellular location">
    <subcellularLocation>
        <location evidence="3">Golgi apparatus membrane</location>
        <topology evidence="3">Single-pass type II membrane protein</topology>
    </subcellularLocation>
</comment>
<comment type="similarity">
    <text evidence="7">Belongs to the D-glucuronyl C5-epimerase family.</text>
</comment>
<proteinExistence type="evidence at protein level"/>
<keyword id="KW-0106">Calcium</keyword>
<keyword id="KW-0903">Direct protein sequencing</keyword>
<keyword id="KW-0333">Golgi apparatus</keyword>
<keyword id="KW-0413">Isomerase</keyword>
<keyword id="KW-0472">Membrane</keyword>
<keyword id="KW-0479">Metal-binding</keyword>
<keyword id="KW-1185">Reference proteome</keyword>
<keyword id="KW-0735">Signal-anchor</keyword>
<keyword id="KW-0812">Transmembrane</keyword>
<keyword id="KW-1133">Transmembrane helix</keyword>
<evidence type="ECO:0000250" key="1">
    <source>
        <dbReference type="UniProtKB" id="F1QR43"/>
    </source>
</evidence>
<evidence type="ECO:0000250" key="2">
    <source>
        <dbReference type="UniProtKB" id="O94923"/>
    </source>
</evidence>
<evidence type="ECO:0000250" key="3">
    <source>
        <dbReference type="UniProtKB" id="Q9EPS3"/>
    </source>
</evidence>
<evidence type="ECO:0000255" key="4"/>
<evidence type="ECO:0000269" key="5">
    <source>
    </source>
</evidence>
<evidence type="ECO:0000269" key="6">
    <source>
    </source>
</evidence>
<evidence type="ECO:0000305" key="7"/>
<evidence type="ECO:0000305" key="8">
    <source>
    </source>
</evidence>
<evidence type="ECO:0000312" key="9">
    <source>
        <dbReference type="EMBL" id="AAB72083.2"/>
    </source>
</evidence>
<dbReference type="EC" id="5.1.3.17" evidence="5"/>
<dbReference type="EMBL" id="AF003927">
    <property type="protein sequence ID" value="AAB72083.2"/>
    <property type="molecule type" value="mRNA"/>
</dbReference>
<dbReference type="RefSeq" id="NP_776495.1">
    <property type="nucleotide sequence ID" value="NM_174070.2"/>
</dbReference>
<dbReference type="RefSeq" id="XP_005211308.1">
    <property type="nucleotide sequence ID" value="XM_005211251.5"/>
</dbReference>
<dbReference type="RefSeq" id="XP_005211309.1">
    <property type="nucleotide sequence ID" value="XM_005211252.5"/>
</dbReference>
<dbReference type="SMR" id="O18756"/>
<dbReference type="FunCoup" id="O18756">
    <property type="interactions" value="2162"/>
</dbReference>
<dbReference type="STRING" id="9913.ENSBTAP00000001844"/>
<dbReference type="PaxDb" id="9913-ENSBTAP00000001844"/>
<dbReference type="Ensembl" id="ENSBTAT00000001844.4">
    <property type="protein sequence ID" value="ENSBTAP00000001844.2"/>
    <property type="gene ID" value="ENSBTAG00000001405.4"/>
</dbReference>
<dbReference type="GeneID" id="281195"/>
<dbReference type="KEGG" id="bta:281195"/>
<dbReference type="CTD" id="26035"/>
<dbReference type="VEuPathDB" id="HostDB:ENSBTAG00000001405"/>
<dbReference type="VGNC" id="VGNC:29394">
    <property type="gene designation" value="GLCE"/>
</dbReference>
<dbReference type="eggNOG" id="KOG3760">
    <property type="taxonomic scope" value="Eukaryota"/>
</dbReference>
<dbReference type="GeneTree" id="ENSGT00390000006043"/>
<dbReference type="HOGENOM" id="CLU_028636_0_0_1"/>
<dbReference type="InParanoid" id="O18756"/>
<dbReference type="OMA" id="RGVFMYF"/>
<dbReference type="OrthoDB" id="5914444at2759"/>
<dbReference type="TreeFam" id="TF105869"/>
<dbReference type="BRENDA" id="5.1.3.17">
    <property type="organism ID" value="908"/>
</dbReference>
<dbReference type="UniPathway" id="UPA00756"/>
<dbReference type="UniPathway" id="UPA00862"/>
<dbReference type="Proteomes" id="UP000009136">
    <property type="component" value="Chromosome 10"/>
</dbReference>
<dbReference type="Bgee" id="ENSBTAG00000001405">
    <property type="expression patterns" value="Expressed in omental fat pad and 110 other cell types or tissues"/>
</dbReference>
<dbReference type="GO" id="GO:0005794">
    <property type="term" value="C:Golgi apparatus"/>
    <property type="evidence" value="ECO:0000250"/>
    <property type="project" value="UniProtKB"/>
</dbReference>
<dbReference type="GO" id="GO:0000139">
    <property type="term" value="C:Golgi membrane"/>
    <property type="evidence" value="ECO:0007669"/>
    <property type="project" value="UniProtKB-SubCell"/>
</dbReference>
<dbReference type="GO" id="GO:0005509">
    <property type="term" value="F:calcium ion binding"/>
    <property type="evidence" value="ECO:0000250"/>
    <property type="project" value="UniProtKB"/>
</dbReference>
<dbReference type="GO" id="GO:0047464">
    <property type="term" value="F:heparosan-N-sulfate-glucuronate 5-epimerase activity"/>
    <property type="evidence" value="ECO:0000250"/>
    <property type="project" value="UniProtKB"/>
</dbReference>
<dbReference type="GO" id="GO:0042803">
    <property type="term" value="F:protein homodimerization activity"/>
    <property type="evidence" value="ECO:0000250"/>
    <property type="project" value="UniProtKB"/>
</dbReference>
<dbReference type="GO" id="GO:0016857">
    <property type="term" value="F:racemase and epimerase activity, acting on carbohydrates and derivatives"/>
    <property type="evidence" value="ECO:0000314"/>
    <property type="project" value="UniProtKB"/>
</dbReference>
<dbReference type="GO" id="GO:0015012">
    <property type="term" value="P:heparan sulfate proteoglycan biosynthetic process"/>
    <property type="evidence" value="ECO:0000314"/>
    <property type="project" value="UniProtKB"/>
</dbReference>
<dbReference type="GO" id="GO:0030210">
    <property type="term" value="P:heparin proteoglycan biosynthetic process"/>
    <property type="evidence" value="ECO:0000314"/>
    <property type="project" value="UniProtKB"/>
</dbReference>
<dbReference type="InterPro" id="IPR010598">
    <property type="entry name" value="C5-epim_C"/>
</dbReference>
<dbReference type="InterPro" id="IPR039721">
    <property type="entry name" value="C5-epimerase"/>
</dbReference>
<dbReference type="PANTHER" id="PTHR13174">
    <property type="entry name" value="D-GLUCURONYL C5-EPIMERASE"/>
    <property type="match status" value="1"/>
</dbReference>
<dbReference type="PANTHER" id="PTHR13174:SF3">
    <property type="entry name" value="D-GLUCURONYL C5-EPIMERASE"/>
    <property type="match status" value="1"/>
</dbReference>
<dbReference type="Pfam" id="PF06662">
    <property type="entry name" value="C5-epim_C"/>
    <property type="match status" value="1"/>
</dbReference>
<dbReference type="Pfam" id="PF21174">
    <property type="entry name" value="Glce_b_sandwich"/>
    <property type="match status" value="1"/>
</dbReference>
<name>GLCE_BOVIN</name>
<gene>
    <name type="primary">GLCE</name>
</gene>
<sequence length="617" mass="69985">MRCLAARVNYKTLIIICALFTLVTVLLWNKCSSDKAIQVPRHLSSGFRVDALEKKAAASESNNYVNHMAKQSEEAFPQEQQKAPPVVGGFNNNGGGRVLGLKYEEIDCLINDEHTIKGRREGNEVFLPFTWVEKYFDVYGKVVQYDGYDRFEFSHSYSKVYAQRAPYHPDGVFMSFEGYNVEVRDRVKCISGVEGVPLSTQWGPQGYFYPIQIAQYGLSHYSKNLTEKPPHIEVYETAEDRDKNSKPNDWTVPKGCFMASVADKSRFTNVKQFIAPETSEGVSLQLGNTKDFIISFDLKFLTNGSVSVVLETTEKNQLFTVHYVSNTQLIAFKERDIYYGIGPRTSWSTVTRDLVTDLRKGVGLSNTKAVKPTRIMPKKVVRLIAKGKGFLDNITISTTAHMAAFFAASDWLVRNQDEKGGWPIMVTRKLGEGFKSLEPGWYSAMAQGQAISTLVRAYLLTKDHIFLNSALRATAPYKFLSEQHGVKAVFMNKHDWYEEYPTTPSSFVLNGFMYSLIGLYDLKETAGEKLGKEARSLYERGMESLKAMLPLYDTGSGTIYDLRHFMLGIAPNLARWDYHTTHINQLQLLSTIDESPIFKEFVKRWKSYLKGSRAKHN</sequence>
<feature type="chain" id="PRO_0000192644" description="D-glucuronyl C5-epimerase">
    <location>
        <begin position="1"/>
        <end position="617"/>
    </location>
</feature>
<feature type="topological domain" description="Cytoplasmic" evidence="4">
    <location>
        <begin position="1"/>
        <end position="11"/>
    </location>
</feature>
<feature type="transmembrane region" description="Helical; Signal-anchor for type II membrane protein" evidence="4">
    <location>
        <begin position="12"/>
        <end position="28"/>
    </location>
</feature>
<feature type="topological domain" description="Lumenal" evidence="4">
    <location>
        <begin position="29"/>
        <end position="617"/>
    </location>
</feature>
<feature type="binding site" evidence="1">
    <location>
        <position position="179"/>
    </location>
    <ligand>
        <name>substrate</name>
    </ligand>
</feature>
<feature type="binding site" evidence="1">
    <location>
        <begin position="184"/>
        <end position="186"/>
    </location>
    <ligand>
        <name>substrate</name>
    </ligand>
</feature>
<feature type="binding site" evidence="2">
    <location>
        <position position="201"/>
    </location>
    <ligand>
        <name>substrate</name>
    </ligand>
</feature>
<feature type="binding site" evidence="2">
    <location>
        <position position="209"/>
    </location>
    <ligand>
        <name>substrate</name>
    </ligand>
</feature>
<feature type="binding site" evidence="1">
    <location>
        <position position="212"/>
    </location>
    <ligand>
        <name>substrate</name>
    </ligand>
</feature>
<feature type="binding site" evidence="2">
    <location>
        <position position="215"/>
    </location>
    <ligand>
        <name>substrate</name>
    </ligand>
</feature>
<feature type="binding site" evidence="2">
    <location>
        <position position="237"/>
    </location>
    <ligand>
        <name>Ca(2+)</name>
        <dbReference type="ChEBI" id="CHEBI:29108"/>
    </ligand>
</feature>
<feature type="binding site" evidence="2">
    <location>
        <position position="239"/>
    </location>
    <ligand>
        <name>Ca(2+)</name>
        <dbReference type="ChEBI" id="CHEBI:29108"/>
    </ligand>
</feature>
<feature type="binding site" evidence="2">
    <location>
        <position position="268"/>
    </location>
    <ligand>
        <name>Ca(2+)</name>
        <dbReference type="ChEBI" id="CHEBI:29108"/>
    </ligand>
</feature>
<feature type="binding site" evidence="2">
    <location>
        <position position="269"/>
    </location>
    <ligand>
        <name>Ca(2+)</name>
        <dbReference type="ChEBI" id="CHEBI:29108"/>
    </ligand>
</feature>
<feature type="binding site" evidence="2">
    <location>
        <position position="392"/>
    </location>
    <ligand>
        <name>Ca(2+)</name>
        <dbReference type="ChEBI" id="CHEBI:29108"/>
    </ligand>
</feature>
<feature type="binding site" evidence="1">
    <location>
        <begin position="429"/>
        <end position="432"/>
    </location>
    <ligand>
        <name>substrate</name>
    </ligand>
</feature>
<feature type="binding site" evidence="2">
    <location>
        <begin position="499"/>
        <end position="500"/>
    </location>
    <ligand>
        <name>substrate</name>
    </ligand>
</feature>
<feature type="binding site" evidence="2">
    <location>
        <position position="510"/>
    </location>
    <ligand>
        <name>substrate</name>
    </ligand>
</feature>
<feature type="binding site" evidence="1">
    <location>
        <position position="514"/>
    </location>
    <ligand>
        <name>substrate</name>
    </ligand>
</feature>
<feature type="binding site" evidence="2">
    <location>
        <position position="560"/>
    </location>
    <ligand>
        <name>substrate</name>
    </ligand>
</feature>
<feature type="binding site" evidence="1">
    <location>
        <position position="563"/>
    </location>
    <ligand>
        <name>substrate</name>
    </ligand>
</feature>
<feature type="binding site" evidence="2">
    <location>
        <begin position="572"/>
        <end position="581"/>
    </location>
    <ligand>
        <name>substrate</name>
    </ligand>
</feature>
<feature type="site" description="Critical for catalysis" evidence="1">
    <location>
        <position position="179"/>
    </location>
</feature>
<feature type="site" description="Critical for catalysis" evidence="1">
    <location>
        <position position="186"/>
    </location>
</feature>
<feature type="site" description="Critical for catalysis" evidence="1">
    <location>
        <position position="560"/>
    </location>
</feature>
<feature type="site" description="Critical for catalysis" evidence="1">
    <location>
        <position position="578"/>
    </location>
</feature>
<feature type="sequence conflict" description="In Ref. 2; AA sequence." evidence="7" ref="2">
    <location>
        <position position="552"/>
    </location>
</feature>